<gene>
    <name evidence="1" type="primary">engB</name>
    <name type="ordered locus">BCQ_4256</name>
</gene>
<name>ENGB_BACCQ</name>
<evidence type="ECO:0000255" key="1">
    <source>
        <dbReference type="HAMAP-Rule" id="MF_00321"/>
    </source>
</evidence>
<dbReference type="EMBL" id="CP000227">
    <property type="protein sequence ID" value="ACM14683.1"/>
    <property type="molecule type" value="Genomic_DNA"/>
</dbReference>
<dbReference type="SMR" id="B9IZ44"/>
<dbReference type="KEGG" id="bcq:BCQ_4256"/>
<dbReference type="HOGENOM" id="CLU_033732_3_0_9"/>
<dbReference type="Proteomes" id="UP000000441">
    <property type="component" value="Chromosome"/>
</dbReference>
<dbReference type="GO" id="GO:0005829">
    <property type="term" value="C:cytosol"/>
    <property type="evidence" value="ECO:0007669"/>
    <property type="project" value="TreeGrafter"/>
</dbReference>
<dbReference type="GO" id="GO:0005525">
    <property type="term" value="F:GTP binding"/>
    <property type="evidence" value="ECO:0007669"/>
    <property type="project" value="UniProtKB-UniRule"/>
</dbReference>
<dbReference type="GO" id="GO:0046872">
    <property type="term" value="F:metal ion binding"/>
    <property type="evidence" value="ECO:0007669"/>
    <property type="project" value="UniProtKB-KW"/>
</dbReference>
<dbReference type="GO" id="GO:0000917">
    <property type="term" value="P:division septum assembly"/>
    <property type="evidence" value="ECO:0007669"/>
    <property type="project" value="UniProtKB-KW"/>
</dbReference>
<dbReference type="CDD" id="cd01876">
    <property type="entry name" value="YihA_EngB"/>
    <property type="match status" value="1"/>
</dbReference>
<dbReference type="FunFam" id="3.40.50.300:FF:000098">
    <property type="entry name" value="Probable GTP-binding protein EngB"/>
    <property type="match status" value="1"/>
</dbReference>
<dbReference type="Gene3D" id="3.40.50.300">
    <property type="entry name" value="P-loop containing nucleotide triphosphate hydrolases"/>
    <property type="match status" value="1"/>
</dbReference>
<dbReference type="HAMAP" id="MF_00321">
    <property type="entry name" value="GTPase_EngB"/>
    <property type="match status" value="1"/>
</dbReference>
<dbReference type="InterPro" id="IPR030393">
    <property type="entry name" value="G_ENGB_dom"/>
</dbReference>
<dbReference type="InterPro" id="IPR006073">
    <property type="entry name" value="GTP-bd"/>
</dbReference>
<dbReference type="InterPro" id="IPR019987">
    <property type="entry name" value="GTP-bd_ribosome_bio_YsxC"/>
</dbReference>
<dbReference type="InterPro" id="IPR027417">
    <property type="entry name" value="P-loop_NTPase"/>
</dbReference>
<dbReference type="InterPro" id="IPR005225">
    <property type="entry name" value="Small_GTP-bd"/>
</dbReference>
<dbReference type="NCBIfam" id="TIGR03598">
    <property type="entry name" value="GTPase_YsxC"/>
    <property type="match status" value="1"/>
</dbReference>
<dbReference type="NCBIfam" id="TIGR00231">
    <property type="entry name" value="small_GTP"/>
    <property type="match status" value="1"/>
</dbReference>
<dbReference type="PANTHER" id="PTHR11649:SF13">
    <property type="entry name" value="ENGB-TYPE G DOMAIN-CONTAINING PROTEIN"/>
    <property type="match status" value="1"/>
</dbReference>
<dbReference type="PANTHER" id="PTHR11649">
    <property type="entry name" value="MSS1/TRME-RELATED GTP-BINDING PROTEIN"/>
    <property type="match status" value="1"/>
</dbReference>
<dbReference type="Pfam" id="PF01926">
    <property type="entry name" value="MMR_HSR1"/>
    <property type="match status" value="1"/>
</dbReference>
<dbReference type="SUPFAM" id="SSF52540">
    <property type="entry name" value="P-loop containing nucleoside triphosphate hydrolases"/>
    <property type="match status" value="1"/>
</dbReference>
<dbReference type="PROSITE" id="PS51706">
    <property type="entry name" value="G_ENGB"/>
    <property type="match status" value="1"/>
</dbReference>
<reference key="1">
    <citation type="journal article" date="2009" name="J. Bacteriol.">
        <title>Complete genome sequence of the extremophilic Bacillus cereus strain Q1 with industrial applications.</title>
        <authorList>
            <person name="Xiong Z."/>
            <person name="Jiang Y."/>
            <person name="Qi D."/>
            <person name="Lu H."/>
            <person name="Yang F."/>
            <person name="Yang J."/>
            <person name="Chen L."/>
            <person name="Sun L."/>
            <person name="Xu X."/>
            <person name="Xue Y."/>
            <person name="Zhu Y."/>
            <person name="Jin Q."/>
        </authorList>
    </citation>
    <scope>NUCLEOTIDE SEQUENCE [LARGE SCALE GENOMIC DNA]</scope>
    <source>
        <strain>Q1</strain>
    </source>
</reference>
<keyword id="KW-0131">Cell cycle</keyword>
<keyword id="KW-0132">Cell division</keyword>
<keyword id="KW-0342">GTP-binding</keyword>
<keyword id="KW-0460">Magnesium</keyword>
<keyword id="KW-0479">Metal-binding</keyword>
<keyword id="KW-0547">Nucleotide-binding</keyword>
<keyword id="KW-0717">Septation</keyword>
<accession>B9IZ44</accession>
<feature type="chain" id="PRO_1000133046" description="Probable GTP-binding protein EngB">
    <location>
        <begin position="1"/>
        <end position="198"/>
    </location>
</feature>
<feature type="domain" description="EngB-type G" evidence="1">
    <location>
        <begin position="22"/>
        <end position="195"/>
    </location>
</feature>
<feature type="binding site" evidence="1">
    <location>
        <begin position="30"/>
        <end position="37"/>
    </location>
    <ligand>
        <name>GTP</name>
        <dbReference type="ChEBI" id="CHEBI:37565"/>
    </ligand>
</feature>
<feature type="binding site" evidence="1">
    <location>
        <position position="37"/>
    </location>
    <ligand>
        <name>Mg(2+)</name>
        <dbReference type="ChEBI" id="CHEBI:18420"/>
    </ligand>
</feature>
<feature type="binding site" evidence="1">
    <location>
        <begin position="57"/>
        <end position="61"/>
    </location>
    <ligand>
        <name>GTP</name>
        <dbReference type="ChEBI" id="CHEBI:37565"/>
    </ligand>
</feature>
<feature type="binding site" evidence="1">
    <location>
        <position position="59"/>
    </location>
    <ligand>
        <name>Mg(2+)</name>
        <dbReference type="ChEBI" id="CHEBI:18420"/>
    </ligand>
</feature>
<feature type="binding site" evidence="1">
    <location>
        <begin position="75"/>
        <end position="78"/>
    </location>
    <ligand>
        <name>GTP</name>
        <dbReference type="ChEBI" id="CHEBI:37565"/>
    </ligand>
</feature>
<feature type="binding site" evidence="1">
    <location>
        <begin position="142"/>
        <end position="145"/>
    </location>
    <ligand>
        <name>GTP</name>
        <dbReference type="ChEBI" id="CHEBI:37565"/>
    </ligand>
</feature>
<feature type="binding site" evidence="1">
    <location>
        <begin position="174"/>
        <end position="176"/>
    </location>
    <ligand>
        <name>GTP</name>
        <dbReference type="ChEBI" id="CHEBI:37565"/>
    </ligand>
</feature>
<protein>
    <recommendedName>
        <fullName evidence="1">Probable GTP-binding protein EngB</fullName>
    </recommendedName>
</protein>
<sequence length="198" mass="22386">MKVTKADIVISAVKPEQYPDGDLPEIALAGRSNVGKSSFINKILNRKKLVRISSKPGKTQTLNFFLINEMMHFVDVPGYGYAKVSKTERAAWGKMIETYFTTREQLDAAVLVVDLRHKPTNDDVMMYDFLKHYDIPTIIIATKADKIPKGKWQKHLKVVKETLDIESGDEVVLFSSETGLGKEEAWKAIHKFTKTKNA</sequence>
<comment type="function">
    <text evidence="1">Necessary for normal cell division and for the maintenance of normal septation.</text>
</comment>
<comment type="cofactor">
    <cofactor evidence="1">
        <name>Mg(2+)</name>
        <dbReference type="ChEBI" id="CHEBI:18420"/>
    </cofactor>
</comment>
<comment type="similarity">
    <text evidence="1">Belongs to the TRAFAC class TrmE-Era-EngA-EngB-Septin-like GTPase superfamily. EngB GTPase family.</text>
</comment>
<proteinExistence type="inferred from homology"/>
<organism>
    <name type="scientific">Bacillus cereus (strain Q1)</name>
    <dbReference type="NCBI Taxonomy" id="361100"/>
    <lineage>
        <taxon>Bacteria</taxon>
        <taxon>Bacillati</taxon>
        <taxon>Bacillota</taxon>
        <taxon>Bacilli</taxon>
        <taxon>Bacillales</taxon>
        <taxon>Bacillaceae</taxon>
        <taxon>Bacillus</taxon>
        <taxon>Bacillus cereus group</taxon>
    </lineage>
</organism>